<gene>
    <name evidence="1" type="primary">ycgN</name>
    <name type="ordered locus">EcSMS35_1968</name>
</gene>
<organism>
    <name type="scientific">Escherichia coli (strain SMS-3-5 / SECEC)</name>
    <dbReference type="NCBI Taxonomy" id="439855"/>
    <lineage>
        <taxon>Bacteria</taxon>
        <taxon>Pseudomonadati</taxon>
        <taxon>Pseudomonadota</taxon>
        <taxon>Gammaproteobacteria</taxon>
        <taxon>Enterobacterales</taxon>
        <taxon>Enterobacteriaceae</taxon>
        <taxon>Escherichia</taxon>
    </lineage>
</organism>
<evidence type="ECO:0000255" key="1">
    <source>
        <dbReference type="HAMAP-Rule" id="MF_00676"/>
    </source>
</evidence>
<accession>B1LHY6</accession>
<name>YCGN_ECOSM</name>
<proteinExistence type="inferred from homology"/>
<protein>
    <recommendedName>
        <fullName evidence="1">UPF0260 protein YcgN</fullName>
    </recommendedName>
</protein>
<feature type="chain" id="PRO_1000131621" description="UPF0260 protein YcgN">
    <location>
        <begin position="1"/>
        <end position="153"/>
    </location>
</feature>
<comment type="similarity">
    <text evidence="1">Belongs to the UPF0260 family.</text>
</comment>
<dbReference type="EMBL" id="CP000970">
    <property type="protein sequence ID" value="ACB18709.1"/>
    <property type="molecule type" value="Genomic_DNA"/>
</dbReference>
<dbReference type="KEGG" id="ecm:EcSMS35_1968"/>
<dbReference type="HOGENOM" id="CLU_109769_2_0_6"/>
<dbReference type="Proteomes" id="UP000007011">
    <property type="component" value="Chromosome"/>
</dbReference>
<dbReference type="HAMAP" id="MF_00676">
    <property type="entry name" value="UPF0260"/>
    <property type="match status" value="1"/>
</dbReference>
<dbReference type="InterPro" id="IPR005358">
    <property type="entry name" value="Puta_zinc/iron-chelating_dom"/>
</dbReference>
<dbReference type="InterPro" id="IPR008228">
    <property type="entry name" value="UCP006173"/>
</dbReference>
<dbReference type="NCBIfam" id="NF003498">
    <property type="entry name" value="PRK05170.1-1"/>
    <property type="match status" value="1"/>
</dbReference>
<dbReference type="NCBIfam" id="NF003501">
    <property type="entry name" value="PRK05170.1-5"/>
    <property type="match status" value="1"/>
</dbReference>
<dbReference type="NCBIfam" id="NF003503">
    <property type="entry name" value="PRK05170.2-1"/>
    <property type="match status" value="1"/>
</dbReference>
<dbReference type="NCBIfam" id="NF003507">
    <property type="entry name" value="PRK05170.2-5"/>
    <property type="match status" value="1"/>
</dbReference>
<dbReference type="PANTHER" id="PTHR37421">
    <property type="entry name" value="UPF0260 PROTEIN YCGN"/>
    <property type="match status" value="1"/>
</dbReference>
<dbReference type="PANTHER" id="PTHR37421:SF1">
    <property type="entry name" value="UPF0260 PROTEIN YCGN"/>
    <property type="match status" value="1"/>
</dbReference>
<dbReference type="Pfam" id="PF03692">
    <property type="entry name" value="CxxCxxCC"/>
    <property type="match status" value="1"/>
</dbReference>
<dbReference type="PIRSF" id="PIRSF006173">
    <property type="entry name" value="UCP006173"/>
    <property type="match status" value="1"/>
</dbReference>
<sequence length="153" mass="17910">MAEHLMSDVPFWQSKTLDEMSDAEWESLCDGCGQCCLHKLMDEDTDEIYFTNVACRQLNIKTCQCRNYERRFEFEPDCIKLTRENLPTFEWLPMTCAYRLLAEGKDLPAWHPLLTGSKAAMHGERISVRHIAVKESEVIDWQDHILNKPDWAQ</sequence>
<reference key="1">
    <citation type="journal article" date="2008" name="J. Bacteriol.">
        <title>Insights into the environmental resistance gene pool from the genome sequence of the multidrug-resistant environmental isolate Escherichia coli SMS-3-5.</title>
        <authorList>
            <person name="Fricke W.F."/>
            <person name="Wright M.S."/>
            <person name="Lindell A.H."/>
            <person name="Harkins D.M."/>
            <person name="Baker-Austin C."/>
            <person name="Ravel J."/>
            <person name="Stepanauskas R."/>
        </authorList>
    </citation>
    <scope>NUCLEOTIDE SEQUENCE [LARGE SCALE GENOMIC DNA]</scope>
    <source>
        <strain>SMS-3-5 / SECEC</strain>
    </source>
</reference>